<organism>
    <name type="scientific">Gracilaria tenuistipitata var. liui</name>
    <name type="common">Red alga</name>
    <dbReference type="NCBI Taxonomy" id="285951"/>
    <lineage>
        <taxon>Eukaryota</taxon>
        <taxon>Rhodophyta</taxon>
        <taxon>Florideophyceae</taxon>
        <taxon>Rhodymeniophycidae</taxon>
        <taxon>Gracilariales</taxon>
        <taxon>Gracilariaceae</taxon>
        <taxon>Gracilaria</taxon>
        <taxon>Gracilaria tenuistipitata</taxon>
    </lineage>
</organism>
<proteinExistence type="inferred from homology"/>
<sequence length="150" mass="15966">MSDFIQSYNNDPFLGNLSTPVSTSTFTKGLLNNLPAYRRGLSPLLRGLEIGMAHGYFLVGPFDKLGPLRNTDVALLSGFLSAVGLIIILTVCLSMYGNVSFDKDDAKDLLQTTEGWGQFTAGFLVGAVGGSGFAYLLLANIPVLQNLGLS</sequence>
<dbReference type="EMBL" id="AY673996">
    <property type="protein sequence ID" value="AAT79741.1"/>
    <property type="molecule type" value="Genomic_DNA"/>
</dbReference>
<dbReference type="RefSeq" id="YP_063666.1">
    <property type="nucleotide sequence ID" value="NC_006137.1"/>
</dbReference>
<dbReference type="SMR" id="Q6B8P4"/>
<dbReference type="GeneID" id="2944022"/>
<dbReference type="GO" id="GO:0009535">
    <property type="term" value="C:chloroplast thylakoid membrane"/>
    <property type="evidence" value="ECO:0007669"/>
    <property type="project" value="UniProtKB-SubCell"/>
</dbReference>
<dbReference type="GO" id="GO:0009538">
    <property type="term" value="C:photosystem I reaction center"/>
    <property type="evidence" value="ECO:0007669"/>
    <property type="project" value="InterPro"/>
</dbReference>
<dbReference type="GO" id="GO:0015979">
    <property type="term" value="P:photosynthesis"/>
    <property type="evidence" value="ECO:0007669"/>
    <property type="project" value="UniProtKB-UniRule"/>
</dbReference>
<dbReference type="Gene3D" id="1.20.1240.10">
    <property type="entry name" value="Photosystem I PsaL, reaction centre subunit XI"/>
    <property type="match status" value="1"/>
</dbReference>
<dbReference type="HAMAP" id="MF_00447">
    <property type="entry name" value="PSI_PsaL"/>
    <property type="match status" value="1"/>
</dbReference>
<dbReference type="InterPro" id="IPR003757">
    <property type="entry name" value="PSI_PsaL"/>
</dbReference>
<dbReference type="InterPro" id="IPR036592">
    <property type="entry name" value="PSI_PsaL_sf"/>
</dbReference>
<dbReference type="InterPro" id="IPR022980">
    <property type="entry name" value="PSI_suXI"/>
</dbReference>
<dbReference type="PANTHER" id="PTHR34803">
    <property type="entry name" value="PHOTOSYSTEM I REACTION CENTER SUBUNIT XI, CHLOROPLASTIC"/>
    <property type="match status" value="1"/>
</dbReference>
<dbReference type="PANTHER" id="PTHR34803:SF2">
    <property type="entry name" value="PHOTOSYSTEM I REACTION CENTER SUBUNIT XI, CHLOROPLASTIC"/>
    <property type="match status" value="1"/>
</dbReference>
<dbReference type="Pfam" id="PF02605">
    <property type="entry name" value="PsaL"/>
    <property type="match status" value="1"/>
</dbReference>
<dbReference type="SUPFAM" id="SSF81568">
    <property type="entry name" value="Photosystem I reaction center subunit XI, PsaL"/>
    <property type="match status" value="1"/>
</dbReference>
<comment type="subcellular location">
    <subcellularLocation>
        <location evidence="2">Plastid</location>
        <location evidence="2">Chloroplast thylakoid membrane</location>
        <topology evidence="2">Multi-pass membrane protein</topology>
    </subcellularLocation>
</comment>
<comment type="similarity">
    <text evidence="2">Belongs to the PsaL family.</text>
</comment>
<feature type="chain" id="PRO_0000194690" description="Photosystem I reaction center subunit XI">
    <location>
        <begin position="1"/>
        <end position="150"/>
    </location>
</feature>
<feature type="topological domain" description="Stromal" evidence="1">
    <location>
        <begin position="1"/>
        <end position="72"/>
    </location>
</feature>
<feature type="transmembrane region" description="Helical" evidence="2">
    <location>
        <begin position="73"/>
        <end position="93"/>
    </location>
</feature>
<feature type="topological domain" description="Lumenal" evidence="1">
    <location>
        <begin position="94"/>
        <end position="118"/>
    </location>
</feature>
<feature type="transmembrane region" description="Helical" evidence="2">
    <location>
        <begin position="119"/>
        <end position="139"/>
    </location>
</feature>
<feature type="topological domain" description="Stromal" evidence="1">
    <location>
        <begin position="140"/>
        <end position="150"/>
    </location>
</feature>
<accession>Q6B8P4</accession>
<gene>
    <name evidence="2" type="primary">psaL</name>
    <name type="ordered locus">Grc000160</name>
</gene>
<keyword id="KW-0150">Chloroplast</keyword>
<keyword id="KW-0472">Membrane</keyword>
<keyword id="KW-0602">Photosynthesis</keyword>
<keyword id="KW-0603">Photosystem I</keyword>
<keyword id="KW-0934">Plastid</keyword>
<keyword id="KW-0793">Thylakoid</keyword>
<keyword id="KW-0812">Transmembrane</keyword>
<keyword id="KW-1133">Transmembrane helix</keyword>
<evidence type="ECO:0000255" key="1"/>
<evidence type="ECO:0000255" key="2">
    <source>
        <dbReference type="HAMAP-Rule" id="MF_00447"/>
    </source>
</evidence>
<protein>
    <recommendedName>
        <fullName evidence="2">Photosystem I reaction center subunit XI</fullName>
    </recommendedName>
    <alternativeName>
        <fullName evidence="2">PSI subunit V</fullName>
    </alternativeName>
    <alternativeName>
        <fullName evidence="2">PSI-L</fullName>
    </alternativeName>
</protein>
<geneLocation type="chloroplast"/>
<name>PSAL_GRATL</name>
<reference key="1">
    <citation type="journal article" date="2004" name="J. Mol. Evol.">
        <title>Comparative analysis of the complete plastid genome sequence of the red alga Gracilaria tenuistipitata var. liui provides insights into the evolution of rhodoplasts and their relationship to other plastids.</title>
        <authorList>
            <person name="Hagopian J.C."/>
            <person name="Reis M."/>
            <person name="Kitajima J.P."/>
            <person name="Bhattacharya D."/>
            <person name="de Oliveira M.C."/>
        </authorList>
    </citation>
    <scope>NUCLEOTIDE SEQUENCE [LARGE SCALE GENOMIC DNA]</scope>
</reference>